<gene>
    <name type="primary">rnhB</name>
    <name type="ordered locus">VC_2246</name>
</gene>
<sequence length="206" mass="22389">MAKKPSIELPPFEIPAGYALIAGVDEVGRGPLVGDVVTAAVILDPNRPIMGLNDSKKLSEKKRLALFPEIQVKALAWAVGRCSPQEIDELNIFQATMVAMQRAVAGLRIQPDLVLIDGNKIPKLPMEAQAVVKGDLRVAQISAASIIAKVIRDQEMEALDKQYPQFGFAKHKGYPTAAHFAAIEQHGVIEQHRKSFGPVKRALGIE</sequence>
<dbReference type="EC" id="3.1.26.4"/>
<dbReference type="EMBL" id="AE003852">
    <property type="protein sequence ID" value="AAF95390.1"/>
    <property type="molecule type" value="Genomic_DNA"/>
</dbReference>
<dbReference type="EMBL" id="U30472">
    <property type="protein sequence ID" value="AAC44577.1"/>
    <property type="molecule type" value="Genomic_DNA"/>
</dbReference>
<dbReference type="PIR" id="H82100">
    <property type="entry name" value="H82100"/>
</dbReference>
<dbReference type="RefSeq" id="NP_231877.1">
    <property type="nucleotide sequence ID" value="NC_002505.1"/>
</dbReference>
<dbReference type="RefSeq" id="WP_001085485.1">
    <property type="nucleotide sequence ID" value="NZ_LT906614.1"/>
</dbReference>
<dbReference type="SMR" id="P52021"/>
<dbReference type="STRING" id="243277.VC_2246"/>
<dbReference type="DNASU" id="2613168"/>
<dbReference type="EnsemblBacteria" id="AAF95390">
    <property type="protein sequence ID" value="AAF95390"/>
    <property type="gene ID" value="VC_2246"/>
</dbReference>
<dbReference type="KEGG" id="vch:VC_2246"/>
<dbReference type="PATRIC" id="fig|243277.26.peg.2142"/>
<dbReference type="eggNOG" id="COG0164">
    <property type="taxonomic scope" value="Bacteria"/>
</dbReference>
<dbReference type="HOGENOM" id="CLU_036532_3_2_6"/>
<dbReference type="Proteomes" id="UP000000584">
    <property type="component" value="Chromosome 1"/>
</dbReference>
<dbReference type="GO" id="GO:0005737">
    <property type="term" value="C:cytoplasm"/>
    <property type="evidence" value="ECO:0007669"/>
    <property type="project" value="UniProtKB-SubCell"/>
</dbReference>
<dbReference type="GO" id="GO:0032299">
    <property type="term" value="C:ribonuclease H2 complex"/>
    <property type="evidence" value="ECO:0000318"/>
    <property type="project" value="GO_Central"/>
</dbReference>
<dbReference type="GO" id="GO:0030145">
    <property type="term" value="F:manganese ion binding"/>
    <property type="evidence" value="ECO:0007669"/>
    <property type="project" value="UniProtKB-UniRule"/>
</dbReference>
<dbReference type="GO" id="GO:0003723">
    <property type="term" value="F:RNA binding"/>
    <property type="evidence" value="ECO:0007669"/>
    <property type="project" value="InterPro"/>
</dbReference>
<dbReference type="GO" id="GO:0004523">
    <property type="term" value="F:RNA-DNA hybrid ribonuclease activity"/>
    <property type="evidence" value="ECO:0000318"/>
    <property type="project" value="GO_Central"/>
</dbReference>
<dbReference type="GO" id="GO:0043137">
    <property type="term" value="P:DNA replication, removal of RNA primer"/>
    <property type="evidence" value="ECO:0000318"/>
    <property type="project" value="GO_Central"/>
</dbReference>
<dbReference type="GO" id="GO:0006298">
    <property type="term" value="P:mismatch repair"/>
    <property type="evidence" value="ECO:0000318"/>
    <property type="project" value="GO_Central"/>
</dbReference>
<dbReference type="CDD" id="cd07182">
    <property type="entry name" value="RNase_HII_bacteria_HII_like"/>
    <property type="match status" value="1"/>
</dbReference>
<dbReference type="FunFam" id="3.30.420.10:FF:000006">
    <property type="entry name" value="Ribonuclease HII"/>
    <property type="match status" value="1"/>
</dbReference>
<dbReference type="Gene3D" id="3.30.420.10">
    <property type="entry name" value="Ribonuclease H-like superfamily/Ribonuclease H"/>
    <property type="match status" value="1"/>
</dbReference>
<dbReference type="HAMAP" id="MF_00052_B">
    <property type="entry name" value="RNase_HII_B"/>
    <property type="match status" value="1"/>
</dbReference>
<dbReference type="InterPro" id="IPR022898">
    <property type="entry name" value="RNase_HII"/>
</dbReference>
<dbReference type="InterPro" id="IPR001352">
    <property type="entry name" value="RNase_HII/HIII"/>
</dbReference>
<dbReference type="InterPro" id="IPR024567">
    <property type="entry name" value="RNase_HII/HIII_dom"/>
</dbReference>
<dbReference type="InterPro" id="IPR012337">
    <property type="entry name" value="RNaseH-like_sf"/>
</dbReference>
<dbReference type="InterPro" id="IPR036397">
    <property type="entry name" value="RNaseH_sf"/>
</dbReference>
<dbReference type="NCBIfam" id="NF000594">
    <property type="entry name" value="PRK00015.1-1"/>
    <property type="match status" value="1"/>
</dbReference>
<dbReference type="NCBIfam" id="NF000595">
    <property type="entry name" value="PRK00015.1-3"/>
    <property type="match status" value="1"/>
</dbReference>
<dbReference type="NCBIfam" id="NF000596">
    <property type="entry name" value="PRK00015.1-4"/>
    <property type="match status" value="1"/>
</dbReference>
<dbReference type="PANTHER" id="PTHR10954">
    <property type="entry name" value="RIBONUCLEASE H2 SUBUNIT A"/>
    <property type="match status" value="1"/>
</dbReference>
<dbReference type="PANTHER" id="PTHR10954:SF18">
    <property type="entry name" value="RIBONUCLEASE HII"/>
    <property type="match status" value="1"/>
</dbReference>
<dbReference type="Pfam" id="PF01351">
    <property type="entry name" value="RNase_HII"/>
    <property type="match status" value="1"/>
</dbReference>
<dbReference type="SUPFAM" id="SSF53098">
    <property type="entry name" value="Ribonuclease H-like"/>
    <property type="match status" value="1"/>
</dbReference>
<dbReference type="PROSITE" id="PS51975">
    <property type="entry name" value="RNASE_H_2"/>
    <property type="match status" value="1"/>
</dbReference>
<comment type="function">
    <text evidence="1">Endonuclease that specifically degrades the RNA of RNA-DNA hybrids.</text>
</comment>
<comment type="catalytic activity">
    <reaction>
        <text>Endonucleolytic cleavage to 5'-phosphomonoester.</text>
        <dbReference type="EC" id="3.1.26.4"/>
    </reaction>
</comment>
<comment type="cofactor">
    <cofactor evidence="1">
        <name>Mn(2+)</name>
        <dbReference type="ChEBI" id="CHEBI:29035"/>
    </cofactor>
    <cofactor evidence="1">
        <name>Mg(2+)</name>
        <dbReference type="ChEBI" id="CHEBI:18420"/>
    </cofactor>
    <text evidence="1">Manganese or magnesium. Binds 1 divalent metal ion per monomer in the absence of substrate. May bind a second metal ion after substrate binding.</text>
</comment>
<comment type="subcellular location">
    <subcellularLocation>
        <location evidence="3">Cytoplasm</location>
    </subcellularLocation>
</comment>
<comment type="similarity">
    <text evidence="3">Belongs to the RNase HII family.</text>
</comment>
<proteinExistence type="inferred from homology"/>
<keyword id="KW-0963">Cytoplasm</keyword>
<keyword id="KW-0255">Endonuclease</keyword>
<keyword id="KW-0378">Hydrolase</keyword>
<keyword id="KW-0464">Manganese</keyword>
<keyword id="KW-0479">Metal-binding</keyword>
<keyword id="KW-0540">Nuclease</keyword>
<keyword id="KW-1185">Reference proteome</keyword>
<feature type="chain" id="PRO_0000111647" description="Ribonuclease HII">
    <location>
        <begin position="1"/>
        <end position="206"/>
    </location>
</feature>
<feature type="domain" description="RNase H type-2" evidence="2">
    <location>
        <begin position="19"/>
        <end position="206"/>
    </location>
</feature>
<feature type="binding site" evidence="1">
    <location>
        <position position="25"/>
    </location>
    <ligand>
        <name>a divalent metal cation</name>
        <dbReference type="ChEBI" id="CHEBI:60240"/>
    </ligand>
</feature>
<feature type="binding site" evidence="1">
    <location>
        <position position="26"/>
    </location>
    <ligand>
        <name>a divalent metal cation</name>
        <dbReference type="ChEBI" id="CHEBI:60240"/>
    </ligand>
</feature>
<feature type="binding site" evidence="1">
    <location>
        <position position="117"/>
    </location>
    <ligand>
        <name>a divalent metal cation</name>
        <dbReference type="ChEBI" id="CHEBI:60240"/>
    </ligand>
</feature>
<feature type="sequence conflict" description="In Ref. 2; AAC44577." evidence="3" ref="2">
    <original>K</original>
    <variation>N</variation>
    <location>
        <position position="170"/>
    </location>
</feature>
<organism>
    <name type="scientific">Vibrio cholerae serotype O1 (strain ATCC 39315 / El Tor Inaba N16961)</name>
    <dbReference type="NCBI Taxonomy" id="243277"/>
    <lineage>
        <taxon>Bacteria</taxon>
        <taxon>Pseudomonadati</taxon>
        <taxon>Pseudomonadota</taxon>
        <taxon>Gammaproteobacteria</taxon>
        <taxon>Vibrionales</taxon>
        <taxon>Vibrionaceae</taxon>
        <taxon>Vibrio</taxon>
    </lineage>
</organism>
<accession>P52021</accession>
<accession>Q9KPW6</accession>
<name>RNH2_VIBCH</name>
<evidence type="ECO:0000250" key="1"/>
<evidence type="ECO:0000255" key="2">
    <source>
        <dbReference type="PROSITE-ProRule" id="PRU01319"/>
    </source>
</evidence>
<evidence type="ECO:0000305" key="3"/>
<reference key="1">
    <citation type="journal article" date="2000" name="Nature">
        <title>DNA sequence of both chromosomes of the cholera pathogen Vibrio cholerae.</title>
        <authorList>
            <person name="Heidelberg J.F."/>
            <person name="Eisen J.A."/>
            <person name="Nelson W.C."/>
            <person name="Clayton R.A."/>
            <person name="Gwinn M.L."/>
            <person name="Dodson R.J."/>
            <person name="Haft D.H."/>
            <person name="Hickey E.K."/>
            <person name="Peterson J.D."/>
            <person name="Umayam L.A."/>
            <person name="Gill S.R."/>
            <person name="Nelson K.E."/>
            <person name="Read T.D."/>
            <person name="Tettelin H."/>
            <person name="Richardson D.L."/>
            <person name="Ermolaeva M.D."/>
            <person name="Vamathevan J.J."/>
            <person name="Bass S."/>
            <person name="Qin H."/>
            <person name="Dragoi I."/>
            <person name="Sellers P."/>
            <person name="McDonald L.A."/>
            <person name="Utterback T.R."/>
            <person name="Fleischmann R.D."/>
            <person name="Nierman W.C."/>
            <person name="White O."/>
            <person name="Salzberg S.L."/>
            <person name="Smith H.O."/>
            <person name="Colwell R.R."/>
            <person name="Mekalanos J.J."/>
            <person name="Venter J.C."/>
            <person name="Fraser C.M."/>
        </authorList>
    </citation>
    <scope>NUCLEOTIDE SEQUENCE [LARGE SCALE GENOMIC DNA]</scope>
    <source>
        <strain>ATCC 39315 / El Tor Inaba N16961</strain>
    </source>
</reference>
<reference key="2">
    <citation type="journal article" date="1996" name="Gene">
        <title>Cloning and characterization of dnaE, encoding the catalytic subunit of replicative DNA polymerase III, from Vibrio cholerae strain C6706.</title>
        <authorList>
            <person name="Franco A.A."/>
            <person name="Yeh P.E."/>
            <person name="Johnson J.A."/>
            <person name="Barry E.M."/>
            <person name="Guerra H."/>
            <person name="Maurer R."/>
            <person name="Morris J.G. Jr."/>
        </authorList>
    </citation>
    <scope>NUCLEOTIDE SEQUENCE [GENOMIC DNA] OF 45-206</scope>
    <source>
        <strain>El Tor Inaba C6706 / Serotype O1</strain>
    </source>
</reference>
<protein>
    <recommendedName>
        <fullName>Ribonuclease HII</fullName>
        <shortName>RNase HII</shortName>
        <ecNumber>3.1.26.4</ecNumber>
    </recommendedName>
</protein>